<organism>
    <name type="scientific">Bos taurus</name>
    <name type="common">Bovine</name>
    <dbReference type="NCBI Taxonomy" id="9913"/>
    <lineage>
        <taxon>Eukaryota</taxon>
        <taxon>Metazoa</taxon>
        <taxon>Chordata</taxon>
        <taxon>Craniata</taxon>
        <taxon>Vertebrata</taxon>
        <taxon>Euteleostomi</taxon>
        <taxon>Mammalia</taxon>
        <taxon>Eutheria</taxon>
        <taxon>Laurasiatheria</taxon>
        <taxon>Artiodactyla</taxon>
        <taxon>Ruminantia</taxon>
        <taxon>Pecora</taxon>
        <taxon>Bovidae</taxon>
        <taxon>Bovinae</taxon>
        <taxon>Bos</taxon>
    </lineage>
</organism>
<evidence type="ECO:0000250" key="1">
    <source>
        <dbReference type="UniProtKB" id="Q5BJM8"/>
    </source>
</evidence>
<evidence type="ECO:0000250" key="2">
    <source>
        <dbReference type="UniProtKB" id="Q8NEW0"/>
    </source>
</evidence>
<evidence type="ECO:0000250" key="3">
    <source>
        <dbReference type="UniProtKB" id="Q9JKN1"/>
    </source>
</evidence>
<evidence type="ECO:0000255" key="4"/>
<evidence type="ECO:0000256" key="5">
    <source>
        <dbReference type="SAM" id="MobiDB-lite"/>
    </source>
</evidence>
<evidence type="ECO:0000305" key="6"/>
<sequence length="376" mass="41745">MLPLSIKDDEYKPPKFNLFRKISGWFRSILSDKTSRNLFFFLCLNLSFAFVELLYGIWSNCLGLISDSFHMFFDSTAILAGLAASVISKWRDNDAFSYGYVRAEVLAGFVNGLFLIFTAFFIFSEGVERALAPPDVHHERLLLVSILGFVVNLVGIFVFKHGGHGHSHGSGHGHSHSLFNGALDQTHGHGDHCHSHELKHGAAHSHDHAHGHGHFHSHDGPSLKETTGPSRQILQGVFLHILADTLGSIGVIASAIMMQNFGLMIADPICSILIAMLIVISVIPLLRESVGILMQRTPPLLENTLPQCYQRVQQLQGVYSLQEQHFWTLCSDVYVGTLKLVVAPDADARWILSQTHNIFTQAGVRQLYVQIDFAAM</sequence>
<name>ZNT7_BOVIN</name>
<gene>
    <name type="primary">SLC30A7</name>
</gene>
<feature type="chain" id="PRO_0000314298" description="Zinc transporter 7">
    <location>
        <begin position="1"/>
        <end position="376"/>
    </location>
</feature>
<feature type="topological domain" description="Cytoplasmic" evidence="6">
    <location>
        <begin position="1"/>
        <end position="37"/>
    </location>
</feature>
<feature type="transmembrane region" description="Helical" evidence="4">
    <location>
        <begin position="38"/>
        <end position="58"/>
    </location>
</feature>
<feature type="topological domain" description="Lumenal" evidence="6">
    <location>
        <begin position="59"/>
        <end position="67"/>
    </location>
</feature>
<feature type="transmembrane region" description="Helical" evidence="4">
    <location>
        <begin position="68"/>
        <end position="88"/>
    </location>
</feature>
<feature type="topological domain" description="Cytoplasmic" evidence="6">
    <location>
        <begin position="89"/>
        <end position="102"/>
    </location>
</feature>
<feature type="transmembrane region" description="Helical" evidence="4">
    <location>
        <begin position="103"/>
        <end position="123"/>
    </location>
</feature>
<feature type="topological domain" description="Lumenal" evidence="6">
    <location>
        <begin position="124"/>
        <end position="140"/>
    </location>
</feature>
<feature type="transmembrane region" description="Helical" evidence="4">
    <location>
        <begin position="141"/>
        <end position="161"/>
    </location>
</feature>
<feature type="topological domain" description="Cytoplasmic" evidence="6">
    <location>
        <begin position="162"/>
        <end position="236"/>
    </location>
</feature>
<feature type="transmembrane region" description="Helical" evidence="4">
    <location>
        <begin position="237"/>
        <end position="257"/>
    </location>
</feature>
<feature type="topological domain" description="Lumenal" evidence="6">
    <location>
        <begin position="258"/>
        <end position="262"/>
    </location>
</feature>
<feature type="transmembrane region" description="Helical" evidence="4">
    <location>
        <begin position="263"/>
        <end position="283"/>
    </location>
</feature>
<feature type="topological domain" description="Cytoplasmic" evidence="6">
    <location>
        <begin position="284"/>
        <end position="376"/>
    </location>
</feature>
<feature type="region of interest" description="His-rich loop">
    <location>
        <begin position="161"/>
        <end position="218"/>
    </location>
</feature>
<feature type="region of interest" description="Disordered" evidence="5">
    <location>
        <begin position="188"/>
        <end position="226"/>
    </location>
</feature>
<feature type="compositionally biased region" description="Basic and acidic residues" evidence="5">
    <location>
        <begin position="188"/>
        <end position="222"/>
    </location>
</feature>
<protein>
    <recommendedName>
        <fullName evidence="6">Zinc transporter 7</fullName>
    </recommendedName>
    <alternativeName>
        <fullName>Solute carrier family 30 member 7</fullName>
    </alternativeName>
</protein>
<accession>A4IFD7</accession>
<comment type="function">
    <text evidence="2">Zinc ion transporter mediating zinc entry from the cytosol into the lumen of organelles along the secretory pathway. By contributing to zinc ion homeostasis within the early secretory pathway, regulates the activation and folding of enzymes like alkaline phosphatases.</text>
</comment>
<comment type="catalytic activity">
    <reaction evidence="2">
        <text>Zn(2+)(in) = Zn(2+)(out)</text>
        <dbReference type="Rhea" id="RHEA:29351"/>
        <dbReference type="ChEBI" id="CHEBI:29105"/>
    </reaction>
</comment>
<comment type="subunit">
    <text evidence="2">Homooligomer.</text>
</comment>
<comment type="subcellular location">
    <subcellularLocation>
        <location evidence="2">Golgi apparatus membrane</location>
        <topology evidence="4">Multi-pass membrane protein</topology>
    </subcellularLocation>
    <subcellularLocation>
        <location evidence="3">Cytoplasmic vesicle</location>
    </subcellularLocation>
    <subcellularLocation>
        <location evidence="3">Golgi apparatus</location>
        <location evidence="3">trans-Golgi network</location>
    </subcellularLocation>
    <subcellularLocation>
        <location evidence="1">Sarcoplasmic reticulum</location>
    </subcellularLocation>
    <subcellularLocation>
        <location evidence="1">Mitochondrion</location>
    </subcellularLocation>
</comment>
<comment type="similarity">
    <text evidence="6">Belongs to the cation diffusion facilitator (CDF) transporter (TC 2.A.4) family. SLC30A subfamily.</text>
</comment>
<keyword id="KW-0968">Cytoplasmic vesicle</keyword>
<keyword id="KW-0333">Golgi apparatus</keyword>
<keyword id="KW-0406">Ion transport</keyword>
<keyword id="KW-0472">Membrane</keyword>
<keyword id="KW-0496">Mitochondrion</keyword>
<keyword id="KW-1185">Reference proteome</keyword>
<keyword id="KW-0703">Sarcoplasmic reticulum</keyword>
<keyword id="KW-0812">Transmembrane</keyword>
<keyword id="KW-1133">Transmembrane helix</keyword>
<keyword id="KW-0813">Transport</keyword>
<keyword id="KW-0862">Zinc</keyword>
<keyword id="KW-0864">Zinc transport</keyword>
<proteinExistence type="evidence at transcript level"/>
<reference key="1">
    <citation type="submission" date="2007-03" db="EMBL/GenBank/DDBJ databases">
        <authorList>
            <consortium name="NIH - Mammalian Gene Collection (MGC) project"/>
        </authorList>
    </citation>
    <scope>NUCLEOTIDE SEQUENCE [LARGE SCALE MRNA]</scope>
    <source>
        <strain>Hereford</strain>
        <tissue>Ascending colon</tissue>
    </source>
</reference>
<dbReference type="EMBL" id="BC134531">
    <property type="protein sequence ID" value="AAI34532.1"/>
    <property type="molecule type" value="mRNA"/>
</dbReference>
<dbReference type="RefSeq" id="NP_001077229.1">
    <property type="nucleotide sequence ID" value="NM_001083760.1"/>
</dbReference>
<dbReference type="SMR" id="A4IFD7"/>
<dbReference type="FunCoup" id="A4IFD7">
    <property type="interactions" value="2432"/>
</dbReference>
<dbReference type="STRING" id="9913.ENSBTAP00000025323"/>
<dbReference type="PaxDb" id="9913-ENSBTAP00000025323"/>
<dbReference type="Ensembl" id="ENSBTAT00000025323.5">
    <property type="protein sequence ID" value="ENSBTAP00000025323.4"/>
    <property type="gene ID" value="ENSBTAG00000019027.6"/>
</dbReference>
<dbReference type="GeneID" id="613851"/>
<dbReference type="KEGG" id="bta:613851"/>
<dbReference type="CTD" id="148867"/>
<dbReference type="VEuPathDB" id="HostDB:ENSBTAG00000019027"/>
<dbReference type="VGNC" id="VGNC:34811">
    <property type="gene designation" value="SLC30A7"/>
</dbReference>
<dbReference type="eggNOG" id="KOG1484">
    <property type="taxonomic scope" value="Eukaryota"/>
</dbReference>
<dbReference type="GeneTree" id="ENSGT00940000159571"/>
<dbReference type="HOGENOM" id="CLU_013430_0_3_1"/>
<dbReference type="InParanoid" id="A4IFD7"/>
<dbReference type="OMA" id="KWRANER"/>
<dbReference type="OrthoDB" id="78669at2759"/>
<dbReference type="TreeFam" id="TF315217"/>
<dbReference type="Proteomes" id="UP000009136">
    <property type="component" value="Chromosome 3"/>
</dbReference>
<dbReference type="Bgee" id="ENSBTAG00000019027">
    <property type="expression patterns" value="Expressed in neutrophil and 108 other cell types or tissues"/>
</dbReference>
<dbReference type="GO" id="GO:0031410">
    <property type="term" value="C:cytoplasmic vesicle"/>
    <property type="evidence" value="ECO:0000318"/>
    <property type="project" value="GO_Central"/>
</dbReference>
<dbReference type="GO" id="GO:0005794">
    <property type="term" value="C:Golgi apparatus"/>
    <property type="evidence" value="ECO:0000318"/>
    <property type="project" value="GO_Central"/>
</dbReference>
<dbReference type="GO" id="GO:1990674">
    <property type="term" value="C:Golgi cis cisterna membrane"/>
    <property type="evidence" value="ECO:0000250"/>
    <property type="project" value="UniProtKB"/>
</dbReference>
<dbReference type="GO" id="GO:0000139">
    <property type="term" value="C:Golgi membrane"/>
    <property type="evidence" value="ECO:0007669"/>
    <property type="project" value="UniProtKB-SubCell"/>
</dbReference>
<dbReference type="GO" id="GO:0005739">
    <property type="term" value="C:mitochondrion"/>
    <property type="evidence" value="ECO:0000250"/>
    <property type="project" value="UniProtKB"/>
</dbReference>
<dbReference type="GO" id="GO:0033017">
    <property type="term" value="C:sarcoplasmic reticulum membrane"/>
    <property type="evidence" value="ECO:0000250"/>
    <property type="project" value="UniProtKB"/>
</dbReference>
<dbReference type="GO" id="GO:0005385">
    <property type="term" value="F:zinc ion transmembrane transporter activity"/>
    <property type="evidence" value="ECO:0000250"/>
    <property type="project" value="UniProtKB"/>
</dbReference>
<dbReference type="GO" id="GO:0006882">
    <property type="term" value="P:intracellular zinc ion homeostasis"/>
    <property type="evidence" value="ECO:0000318"/>
    <property type="project" value="GO_Central"/>
</dbReference>
<dbReference type="GO" id="GO:1904257">
    <property type="term" value="P:zinc ion import into Golgi lumen"/>
    <property type="evidence" value="ECO:0000250"/>
    <property type="project" value="UniProtKB"/>
</dbReference>
<dbReference type="Gene3D" id="1.20.1510.10">
    <property type="entry name" value="Cation efflux protein transmembrane domain"/>
    <property type="match status" value="1"/>
</dbReference>
<dbReference type="InterPro" id="IPR002524">
    <property type="entry name" value="Cation_efflux"/>
</dbReference>
<dbReference type="InterPro" id="IPR027469">
    <property type="entry name" value="Cation_efflux_TMD_sf"/>
</dbReference>
<dbReference type="InterPro" id="IPR045316">
    <property type="entry name" value="Msc2-like"/>
</dbReference>
<dbReference type="NCBIfam" id="TIGR01297">
    <property type="entry name" value="CDF"/>
    <property type="match status" value="1"/>
</dbReference>
<dbReference type="PANTHER" id="PTHR45755">
    <property type="match status" value="1"/>
</dbReference>
<dbReference type="PANTHER" id="PTHR45755:SF4">
    <property type="entry name" value="ZINC TRANSPORTER 7"/>
    <property type="match status" value="1"/>
</dbReference>
<dbReference type="Pfam" id="PF01545">
    <property type="entry name" value="Cation_efflux"/>
    <property type="match status" value="1"/>
</dbReference>
<dbReference type="SUPFAM" id="SSF161111">
    <property type="entry name" value="Cation efflux protein transmembrane domain-like"/>
    <property type="match status" value="1"/>
</dbReference>